<organism>
    <name type="scientific">Limulus polyphemus</name>
    <name type="common">Atlantic horseshoe crab</name>
    <dbReference type="NCBI Taxonomy" id="6850"/>
    <lineage>
        <taxon>Eukaryota</taxon>
        <taxon>Metazoa</taxon>
        <taxon>Ecdysozoa</taxon>
        <taxon>Arthropoda</taxon>
        <taxon>Chelicerata</taxon>
        <taxon>Merostomata</taxon>
        <taxon>Xiphosura</taxon>
        <taxon>Limulidae</taxon>
        <taxon>Limulus</taxon>
    </lineage>
</organism>
<proteinExistence type="evidence at protein level"/>
<feature type="chain" id="PRO_0000088682" description="Cocoonase">
    <location>
        <begin position="1"/>
        <end position="14" status="greater than"/>
    </location>
</feature>
<feature type="domain" description="Peptidase S1" evidence="1">
    <location>
        <begin position="1"/>
        <end position="14" status="greater than"/>
    </location>
</feature>
<feature type="non-terminal residue">
    <location>
        <position position="14"/>
    </location>
</feature>
<keyword id="KW-0903">Direct protein sequencing</keyword>
<keyword id="KW-0378">Hydrolase</keyword>
<keyword id="KW-0645">Protease</keyword>
<keyword id="KW-0964">Secreted</keyword>
<keyword id="KW-0720">Serine protease</keyword>
<reference key="1">
    <citation type="journal article" date="1977" name="Adv. Enzymol. Relat. Areas Mol. Biol.">
        <title>Insect proteases and peptidases.</title>
        <authorList>
            <person name="Law J.H."/>
            <person name="Dunn P.E."/>
            <person name="Kramer K.J."/>
        </authorList>
    </citation>
    <scope>PROTEIN SEQUENCE</scope>
</reference>
<accession>P35586</accession>
<comment type="function">
    <text>Protease that shows preferential cleavage after Arg and Lys residues.</text>
</comment>
<comment type="subcellular location">
    <subcellularLocation>
        <location>Secreted</location>
        <location>Extracellular space</location>
    </subcellularLocation>
</comment>
<comment type="similarity">
    <text evidence="1">Belongs to the peptidase S1 family.</text>
</comment>
<sequence>IVGGFTIGIDTVPY</sequence>
<name>COCO_LIMPO</name>
<evidence type="ECO:0000255" key="1">
    <source>
        <dbReference type="PROSITE-ProRule" id="PRU00274"/>
    </source>
</evidence>
<dbReference type="EC" id="3.4.21.-"/>
<dbReference type="MEROPS" id="S01.112"/>
<dbReference type="Proteomes" id="UP000694941">
    <property type="component" value="Unplaced"/>
</dbReference>
<dbReference type="GO" id="GO:0005576">
    <property type="term" value="C:extracellular region"/>
    <property type="evidence" value="ECO:0007669"/>
    <property type="project" value="UniProtKB-SubCell"/>
</dbReference>
<dbReference type="GO" id="GO:0008236">
    <property type="term" value="F:serine-type peptidase activity"/>
    <property type="evidence" value="ECO:0007669"/>
    <property type="project" value="UniProtKB-KW"/>
</dbReference>
<dbReference type="GO" id="GO:0006508">
    <property type="term" value="P:proteolysis"/>
    <property type="evidence" value="ECO:0007669"/>
    <property type="project" value="UniProtKB-KW"/>
</dbReference>
<protein>
    <recommendedName>
        <fullName>Cocoonase</fullName>
        <ecNumber>3.4.21.-</ecNumber>
    </recommendedName>
</protein>